<keyword id="KW-0067">ATP-binding</keyword>
<keyword id="KW-0997">Cell inner membrane</keyword>
<keyword id="KW-1003">Cell membrane</keyword>
<keyword id="KW-0406">Ion transport</keyword>
<keyword id="KW-0472">Membrane</keyword>
<keyword id="KW-0547">Nucleotide-binding</keyword>
<keyword id="KW-0630">Potassium</keyword>
<keyword id="KW-0633">Potassium transport</keyword>
<keyword id="KW-0812">Transmembrane</keyword>
<keyword id="KW-1133">Transmembrane helix</keyword>
<keyword id="KW-0813">Transport</keyword>
<name>KDPC_PSEPG</name>
<organism>
    <name type="scientific">Pseudomonas putida (strain GB-1)</name>
    <dbReference type="NCBI Taxonomy" id="76869"/>
    <lineage>
        <taxon>Bacteria</taxon>
        <taxon>Pseudomonadati</taxon>
        <taxon>Pseudomonadota</taxon>
        <taxon>Gammaproteobacteria</taxon>
        <taxon>Pseudomonadales</taxon>
        <taxon>Pseudomonadaceae</taxon>
        <taxon>Pseudomonas</taxon>
    </lineage>
</organism>
<accession>B0KNU2</accession>
<dbReference type="EMBL" id="CP000926">
    <property type="protein sequence ID" value="ABY99621.1"/>
    <property type="molecule type" value="Genomic_DNA"/>
</dbReference>
<dbReference type="RefSeq" id="WP_012273326.1">
    <property type="nucleotide sequence ID" value="NC_010322.1"/>
</dbReference>
<dbReference type="SMR" id="B0KNU2"/>
<dbReference type="KEGG" id="ppg:PputGB1_3731"/>
<dbReference type="eggNOG" id="COG2156">
    <property type="taxonomic scope" value="Bacteria"/>
</dbReference>
<dbReference type="HOGENOM" id="CLU_077094_2_0_6"/>
<dbReference type="Proteomes" id="UP000002157">
    <property type="component" value="Chromosome"/>
</dbReference>
<dbReference type="GO" id="GO:0005886">
    <property type="term" value="C:plasma membrane"/>
    <property type="evidence" value="ECO:0007669"/>
    <property type="project" value="UniProtKB-SubCell"/>
</dbReference>
<dbReference type="GO" id="GO:0005524">
    <property type="term" value="F:ATP binding"/>
    <property type="evidence" value="ECO:0007669"/>
    <property type="project" value="UniProtKB-UniRule"/>
</dbReference>
<dbReference type="GO" id="GO:0008556">
    <property type="term" value="F:P-type potassium transmembrane transporter activity"/>
    <property type="evidence" value="ECO:0007669"/>
    <property type="project" value="InterPro"/>
</dbReference>
<dbReference type="HAMAP" id="MF_00276">
    <property type="entry name" value="KdpC"/>
    <property type="match status" value="1"/>
</dbReference>
<dbReference type="InterPro" id="IPR003820">
    <property type="entry name" value="KdpC"/>
</dbReference>
<dbReference type="NCBIfam" id="TIGR00681">
    <property type="entry name" value="kdpC"/>
    <property type="match status" value="1"/>
</dbReference>
<dbReference type="NCBIfam" id="NF001454">
    <property type="entry name" value="PRK00315.1"/>
    <property type="match status" value="1"/>
</dbReference>
<dbReference type="PANTHER" id="PTHR30042">
    <property type="entry name" value="POTASSIUM-TRANSPORTING ATPASE C CHAIN"/>
    <property type="match status" value="1"/>
</dbReference>
<dbReference type="PANTHER" id="PTHR30042:SF2">
    <property type="entry name" value="POTASSIUM-TRANSPORTING ATPASE KDPC SUBUNIT"/>
    <property type="match status" value="1"/>
</dbReference>
<dbReference type="Pfam" id="PF02669">
    <property type="entry name" value="KdpC"/>
    <property type="match status" value="1"/>
</dbReference>
<dbReference type="PIRSF" id="PIRSF001296">
    <property type="entry name" value="K_ATPase_KdpC"/>
    <property type="match status" value="1"/>
</dbReference>
<reference key="1">
    <citation type="submission" date="2008-01" db="EMBL/GenBank/DDBJ databases">
        <title>Complete sequence of Pseudomonas putida GB-1.</title>
        <authorList>
            <consortium name="US DOE Joint Genome Institute"/>
            <person name="Copeland A."/>
            <person name="Lucas S."/>
            <person name="Lapidus A."/>
            <person name="Barry K."/>
            <person name="Glavina del Rio T."/>
            <person name="Dalin E."/>
            <person name="Tice H."/>
            <person name="Pitluck S."/>
            <person name="Bruce D."/>
            <person name="Goodwin L."/>
            <person name="Chertkov O."/>
            <person name="Brettin T."/>
            <person name="Detter J.C."/>
            <person name="Han C."/>
            <person name="Kuske C.R."/>
            <person name="Schmutz J."/>
            <person name="Larimer F."/>
            <person name="Land M."/>
            <person name="Hauser L."/>
            <person name="Kyrpides N."/>
            <person name="Kim E."/>
            <person name="McCarthy J.K."/>
            <person name="Richardson P."/>
        </authorList>
    </citation>
    <scope>NUCLEOTIDE SEQUENCE [LARGE SCALE GENOMIC DNA]</scope>
    <source>
        <strain>GB-1</strain>
    </source>
</reference>
<feature type="chain" id="PRO_1000078800" description="Potassium-transporting ATPase KdpC subunit">
    <location>
        <begin position="1"/>
        <end position="183"/>
    </location>
</feature>
<feature type="transmembrane region" description="Helical" evidence="1">
    <location>
        <begin position="11"/>
        <end position="31"/>
    </location>
</feature>
<comment type="function">
    <text evidence="1">Part of the high-affinity ATP-driven potassium transport (or Kdp) system, which catalyzes the hydrolysis of ATP coupled with the electrogenic transport of potassium into the cytoplasm. This subunit acts as a catalytic chaperone that increases the ATP-binding affinity of the ATP-hydrolyzing subunit KdpB by the formation of a transient KdpB/KdpC/ATP ternary complex.</text>
</comment>
<comment type="subunit">
    <text evidence="1">The system is composed of three essential subunits: KdpA, KdpB and KdpC.</text>
</comment>
<comment type="subcellular location">
    <subcellularLocation>
        <location evidence="1">Cell inner membrane</location>
        <topology evidence="1">Single-pass membrane protein</topology>
    </subcellularLocation>
</comment>
<comment type="similarity">
    <text evidence="1">Belongs to the KdpC family.</text>
</comment>
<evidence type="ECO:0000255" key="1">
    <source>
        <dbReference type="HAMAP-Rule" id="MF_00276"/>
    </source>
</evidence>
<protein>
    <recommendedName>
        <fullName evidence="1">Potassium-transporting ATPase KdpC subunit</fullName>
    </recommendedName>
    <alternativeName>
        <fullName evidence="1">ATP phosphohydrolase [potassium-transporting] C chain</fullName>
    </alternativeName>
    <alternativeName>
        <fullName evidence="1">Potassium-binding and translocating subunit C</fullName>
    </alternativeName>
    <alternativeName>
        <fullName evidence="1">Potassium-translocating ATPase C chain</fullName>
    </alternativeName>
</protein>
<sequence>MNAYVRPALSLALLMTLLTGVLYPLAVTGVAQVAFPNQANGSLVRDEHGQVRGSALIAQDFQGDGWFHSRPSAGAYATVASSASNLSPSNPALAERVKGDAATLFQAQQGPVPQALLTTSGSGLDPHLPPEAVAYQIPRVAAARQLPVERLQALQEEATLHPLIGPPVVNVLALNQKIEQLSH</sequence>
<proteinExistence type="inferred from homology"/>
<gene>
    <name evidence="1" type="primary">kdpC</name>
    <name type="ordered locus">PputGB1_3731</name>
</gene>